<gene>
    <name type="primary">prr-1</name>
    <name type="synonym">rim20</name>
    <name type="ORF">NCU05876</name>
</gene>
<name>PALA_NEUCR</name>
<accession>Q7S532</accession>
<proteinExistence type="inferred from homology"/>
<dbReference type="EMBL" id="CM002242">
    <property type="protein sequence ID" value="EAA30631.2"/>
    <property type="molecule type" value="Genomic_DNA"/>
</dbReference>
<dbReference type="RefSeq" id="XP_959867.2">
    <property type="nucleotide sequence ID" value="XM_954774.2"/>
</dbReference>
<dbReference type="SMR" id="Q7S532"/>
<dbReference type="FunCoup" id="Q7S532">
    <property type="interactions" value="1161"/>
</dbReference>
<dbReference type="STRING" id="367110.Q7S532"/>
<dbReference type="PaxDb" id="5141-EFNCRP00000005796"/>
<dbReference type="EnsemblFungi" id="EAA30631">
    <property type="protein sequence ID" value="EAA30631"/>
    <property type="gene ID" value="NCU05876"/>
</dbReference>
<dbReference type="GeneID" id="3875999"/>
<dbReference type="KEGG" id="ncr:NCU05876"/>
<dbReference type="VEuPathDB" id="FungiDB:NCU05876"/>
<dbReference type="HOGENOM" id="CLU_007181_0_0_1"/>
<dbReference type="InParanoid" id="Q7S532"/>
<dbReference type="OrthoDB" id="64867at2759"/>
<dbReference type="Proteomes" id="UP000001805">
    <property type="component" value="Chromosome 7, Linkage Group VII"/>
</dbReference>
<dbReference type="GO" id="GO:0005768">
    <property type="term" value="C:endosome"/>
    <property type="evidence" value="ECO:0000318"/>
    <property type="project" value="GO_Central"/>
</dbReference>
<dbReference type="CDD" id="cd09241">
    <property type="entry name" value="BRO1_ScRim20-like"/>
    <property type="match status" value="1"/>
</dbReference>
<dbReference type="CDD" id="cd09236">
    <property type="entry name" value="V_AnPalA_UmRIM20_like"/>
    <property type="match status" value="1"/>
</dbReference>
<dbReference type="Gene3D" id="1.20.120.560">
    <property type="entry name" value="alix/aip1 in complex with the ypdl late domain"/>
    <property type="match status" value="1"/>
</dbReference>
<dbReference type="Gene3D" id="1.20.140.50">
    <property type="entry name" value="alix/aip1 like domains"/>
    <property type="match status" value="1"/>
</dbReference>
<dbReference type="Gene3D" id="1.25.40.280">
    <property type="entry name" value="alix/aip1 like domains"/>
    <property type="match status" value="1"/>
</dbReference>
<dbReference type="InterPro" id="IPR025304">
    <property type="entry name" value="ALIX_V_dom"/>
</dbReference>
<dbReference type="InterPro" id="IPR004328">
    <property type="entry name" value="BRO1_dom"/>
</dbReference>
<dbReference type="InterPro" id="IPR038499">
    <property type="entry name" value="BRO1_sf"/>
</dbReference>
<dbReference type="PANTHER" id="PTHR23030">
    <property type="entry name" value="PCD6 INTERACTING PROTEIN-RELATED"/>
    <property type="match status" value="1"/>
</dbReference>
<dbReference type="PANTHER" id="PTHR23030:SF39">
    <property type="entry name" value="PROGRAMMED CELL DEATH 6-INTERACTING PROTEIN"/>
    <property type="match status" value="1"/>
</dbReference>
<dbReference type="Pfam" id="PF13949">
    <property type="entry name" value="ALIX_LYPXL_bnd"/>
    <property type="match status" value="1"/>
</dbReference>
<dbReference type="Pfam" id="PF03097">
    <property type="entry name" value="BRO1"/>
    <property type="match status" value="1"/>
</dbReference>
<dbReference type="SMART" id="SM01041">
    <property type="entry name" value="BRO1"/>
    <property type="match status" value="1"/>
</dbReference>
<dbReference type="PROSITE" id="PS51180">
    <property type="entry name" value="BRO1"/>
    <property type="match status" value="1"/>
</dbReference>
<feature type="chain" id="PRO_0000218882" description="pH-response regulator protein palA/prr-1">
    <location>
        <begin position="1"/>
        <end position="854"/>
    </location>
</feature>
<feature type="domain" description="BRO1" evidence="3">
    <location>
        <begin position="5"/>
        <end position="402"/>
    </location>
</feature>
<feature type="region of interest" description="Disordered" evidence="4">
    <location>
        <begin position="739"/>
        <end position="782"/>
    </location>
</feature>
<feature type="region of interest" description="Disordered" evidence="4">
    <location>
        <begin position="801"/>
        <end position="854"/>
    </location>
</feature>
<feature type="coiled-coil region" evidence="2">
    <location>
        <begin position="632"/>
        <end position="699"/>
    </location>
</feature>
<feature type="compositionally biased region" description="Polar residues" evidence="4">
    <location>
        <begin position="746"/>
        <end position="759"/>
    </location>
</feature>
<feature type="compositionally biased region" description="Pro residues" evidence="4">
    <location>
        <begin position="767"/>
        <end position="782"/>
    </location>
</feature>
<feature type="compositionally biased region" description="Low complexity" evidence="4">
    <location>
        <begin position="827"/>
        <end position="839"/>
    </location>
</feature>
<organism>
    <name type="scientific">Neurospora crassa (strain ATCC 24698 / 74-OR23-1A / CBS 708.71 / DSM 1257 / FGSC 987)</name>
    <dbReference type="NCBI Taxonomy" id="367110"/>
    <lineage>
        <taxon>Eukaryota</taxon>
        <taxon>Fungi</taxon>
        <taxon>Dikarya</taxon>
        <taxon>Ascomycota</taxon>
        <taxon>Pezizomycotina</taxon>
        <taxon>Sordariomycetes</taxon>
        <taxon>Sordariomycetidae</taxon>
        <taxon>Sordariales</taxon>
        <taxon>Sordariaceae</taxon>
        <taxon>Neurospora</taxon>
    </lineage>
</organism>
<comment type="function">
    <text evidence="1">Required for the proteolytic cleavage of the transcription factor pacc-1 in response to alkaline ambient pH. May act as a scaffold protein that recruits the calpain-like protease palB/cpr-8 via snf7/vps-3 to its substrate pacc-1 (By similarity).</text>
</comment>
<comment type="subunit">
    <text evidence="1">Interacts with pacc-1 by binding to its two YPX[LI] motifs.</text>
</comment>
<comment type="similarity">
    <text evidence="5">Belongs to the palA/RIM20 family.</text>
</comment>
<evidence type="ECO:0000250" key="1"/>
<evidence type="ECO:0000255" key="2"/>
<evidence type="ECO:0000255" key="3">
    <source>
        <dbReference type="PROSITE-ProRule" id="PRU00526"/>
    </source>
</evidence>
<evidence type="ECO:0000256" key="4">
    <source>
        <dbReference type="SAM" id="MobiDB-lite"/>
    </source>
</evidence>
<evidence type="ECO:0000305" key="5"/>
<keyword id="KW-0175">Coiled coil</keyword>
<keyword id="KW-1185">Reference proteome</keyword>
<reference key="1">
    <citation type="journal article" date="2003" name="Nature">
        <title>The genome sequence of the filamentous fungus Neurospora crassa.</title>
        <authorList>
            <person name="Galagan J.E."/>
            <person name="Calvo S.E."/>
            <person name="Borkovich K.A."/>
            <person name="Selker E.U."/>
            <person name="Read N.D."/>
            <person name="Jaffe D.B."/>
            <person name="FitzHugh W."/>
            <person name="Ma L.-J."/>
            <person name="Smirnov S."/>
            <person name="Purcell S."/>
            <person name="Rehman B."/>
            <person name="Elkins T."/>
            <person name="Engels R."/>
            <person name="Wang S."/>
            <person name="Nielsen C.B."/>
            <person name="Butler J."/>
            <person name="Endrizzi M."/>
            <person name="Qui D."/>
            <person name="Ianakiev P."/>
            <person name="Bell-Pedersen D."/>
            <person name="Nelson M.A."/>
            <person name="Werner-Washburne M."/>
            <person name="Selitrennikoff C.P."/>
            <person name="Kinsey J.A."/>
            <person name="Braun E.L."/>
            <person name="Zelter A."/>
            <person name="Schulte U."/>
            <person name="Kothe G.O."/>
            <person name="Jedd G."/>
            <person name="Mewes H.-W."/>
            <person name="Staben C."/>
            <person name="Marcotte E."/>
            <person name="Greenberg D."/>
            <person name="Roy A."/>
            <person name="Foley K."/>
            <person name="Naylor J."/>
            <person name="Stange-Thomann N."/>
            <person name="Barrett R."/>
            <person name="Gnerre S."/>
            <person name="Kamal M."/>
            <person name="Kamvysselis M."/>
            <person name="Mauceli E.W."/>
            <person name="Bielke C."/>
            <person name="Rudd S."/>
            <person name="Frishman D."/>
            <person name="Krystofova S."/>
            <person name="Rasmussen C."/>
            <person name="Metzenberg R.L."/>
            <person name="Perkins D.D."/>
            <person name="Kroken S."/>
            <person name="Cogoni C."/>
            <person name="Macino G."/>
            <person name="Catcheside D.E.A."/>
            <person name="Li W."/>
            <person name="Pratt R.J."/>
            <person name="Osmani S.A."/>
            <person name="DeSouza C.P.C."/>
            <person name="Glass N.L."/>
            <person name="Orbach M.J."/>
            <person name="Berglund J.A."/>
            <person name="Voelker R."/>
            <person name="Yarden O."/>
            <person name="Plamann M."/>
            <person name="Seiler S."/>
            <person name="Dunlap J.C."/>
            <person name="Radford A."/>
            <person name="Aramayo R."/>
            <person name="Natvig D.O."/>
            <person name="Alex L.A."/>
            <person name="Mannhaupt G."/>
            <person name="Ebbole D.J."/>
            <person name="Freitag M."/>
            <person name="Paulsen I."/>
            <person name="Sachs M.S."/>
            <person name="Lander E.S."/>
            <person name="Nusbaum C."/>
            <person name="Birren B.W."/>
        </authorList>
    </citation>
    <scope>NUCLEOTIDE SEQUENCE [LARGE SCALE GENOMIC DNA]</scope>
    <source>
        <strain>ATCC 24698 / 74-OR23-1A / CBS 708.71 / DSM 1257 / FGSC 987</strain>
    </source>
</reference>
<protein>
    <recommendedName>
        <fullName>pH-response regulator protein palA/prr-1</fullName>
    </recommendedName>
</protein>
<sequence>MTTTHVLSLPFRKSTQLSLSRAIQQYISAKYDQHPDMFRHDLDTIDALRRDAINVREAHPSGIRKLQMYAAQLVWIGGKFPIDVGADFTWYPALGYHTEHPLVQNNLKYELMNVLYNLAALYSQLAVASNRNSTEGLKTAASWFSHSAGVLTHIKTQVLPELRMPSPPDDMDETTLESLIQLFLAEAQECYWQKAVMDGYKDASIAKLAARVSDLYNEAGEAAMRSEAISSAWIHHMSAKHHHFAAAAQFRAASDCLERKKYGEEIARLRDAVACVNEGLKETRGGYLSKAVVEDLQGLKRRLEEDLKRAEIDNDRVYLHIVPPKTELKRLDRANMAVARVPPQVAKPYEFLGDPSAEFGPALFTKLVPFAVHVAVSIYEERRDRLVNNSIISELESMTSQLHEILSSLNLPGSLQALEKPLGLPGTLVQHADEIRQADALYRLQQGLTDIDKLCSSDLAIFEEGRSLLLAEEEEDSRLRLKYGTERWNRPQSRQDPSPNGGTKLWRQAQDIEGYFGSSTASDQVVREKFNAVRDTLTILAGSDRSIMDFIPNSRRTDIPESLKPALGRLRSAYNDVQRLESRRRKRVESLRARSRADDIKPDILVEAARLERAYPTTAIATAHFEDFFEKRLDRLYESELEAVERDKQEQEKIVQEVKRANKEFEAQKRQVDRAGGGNREREEALQKLDAAYYKYKEIVSNVEVGRKFYNDLSQIVEQWRGLVRGWVSERRRDARSLEEEINMPPLSSLNMHQSSFSYQQQQHHQQPPPPPPQIPFPEPIQPHQPIVEQAHIQSWADNVPQQQPKPVAPGAWAPNMGIKFGSPVAQGQQHQQEQGQPGPVNATWDPSQGIRFG</sequence>